<organism>
    <name type="scientific">Clostridium botulinum (strain Langeland / NCTC 10281 / Type F)</name>
    <dbReference type="NCBI Taxonomy" id="441772"/>
    <lineage>
        <taxon>Bacteria</taxon>
        <taxon>Bacillati</taxon>
        <taxon>Bacillota</taxon>
        <taxon>Clostridia</taxon>
        <taxon>Eubacteriales</taxon>
        <taxon>Clostridiaceae</taxon>
        <taxon>Clostridium</taxon>
    </lineage>
</organism>
<gene>
    <name evidence="1" type="primary">rsmA</name>
    <name evidence="1" type="synonym">ksgA</name>
    <name type="ordered locus">CLI_0137</name>
</gene>
<proteinExistence type="inferred from homology"/>
<sequence>MNTKEIVNKYEFKFNKNLGQNFLIDESVLEDIIEGAEISKEDTVIEIGPGVGTLTKELLERAKEVYSIELDGDLIPILQEELKEYNNFTLIHKDALKIDFNELMENKESIKLVANLPYYVTTPIISRLLTEKCDFKSLTIMIQKEVAERINAEPNCKEYGSLTVLVQYYCNTKIIRKVSPNSFIPRPKVDSIVIKLDRLSEPRVRVKSQKLFFNVVRSSFNMRRKTLWNSLKSLNIDKESMENAFERAGIDPKRRGETLSIEEFGKLSDCIYDIL</sequence>
<feature type="chain" id="PRO_1000212241" description="Ribosomal RNA small subunit methyltransferase A">
    <location>
        <begin position="1"/>
        <end position="275"/>
    </location>
</feature>
<feature type="binding site" evidence="1">
    <location>
        <position position="21"/>
    </location>
    <ligand>
        <name>S-adenosyl-L-methionine</name>
        <dbReference type="ChEBI" id="CHEBI:59789"/>
    </ligand>
</feature>
<feature type="binding site" evidence="1">
    <location>
        <position position="23"/>
    </location>
    <ligand>
        <name>S-adenosyl-L-methionine</name>
        <dbReference type="ChEBI" id="CHEBI:59789"/>
    </ligand>
</feature>
<feature type="binding site" evidence="1">
    <location>
        <position position="48"/>
    </location>
    <ligand>
        <name>S-adenosyl-L-methionine</name>
        <dbReference type="ChEBI" id="CHEBI:59789"/>
    </ligand>
</feature>
<feature type="binding site" evidence="1">
    <location>
        <position position="69"/>
    </location>
    <ligand>
        <name>S-adenosyl-L-methionine</name>
        <dbReference type="ChEBI" id="CHEBI:59789"/>
    </ligand>
</feature>
<feature type="binding site" evidence="1">
    <location>
        <position position="94"/>
    </location>
    <ligand>
        <name>S-adenosyl-L-methionine</name>
        <dbReference type="ChEBI" id="CHEBI:59789"/>
    </ligand>
</feature>
<feature type="binding site" evidence="1">
    <location>
        <position position="115"/>
    </location>
    <ligand>
        <name>S-adenosyl-L-methionine</name>
        <dbReference type="ChEBI" id="CHEBI:59789"/>
    </ligand>
</feature>
<reference key="1">
    <citation type="submission" date="2007-06" db="EMBL/GenBank/DDBJ databases">
        <authorList>
            <person name="Brinkac L.M."/>
            <person name="Daugherty S."/>
            <person name="Dodson R.J."/>
            <person name="Madupu R."/>
            <person name="Brown J.L."/>
            <person name="Bruce D."/>
            <person name="Detter C."/>
            <person name="Munk C."/>
            <person name="Smith L.A."/>
            <person name="Smith T.J."/>
            <person name="White O."/>
            <person name="Brettin T.S."/>
        </authorList>
    </citation>
    <scope>NUCLEOTIDE SEQUENCE [LARGE SCALE GENOMIC DNA]</scope>
    <source>
        <strain>Langeland / NCTC 10281 / Type F</strain>
    </source>
</reference>
<comment type="function">
    <text evidence="1">Specifically dimethylates two adjacent adenosines (A1518 and A1519) in the loop of a conserved hairpin near the 3'-end of 16S rRNA in the 30S particle. May play a critical role in biogenesis of 30S subunits.</text>
</comment>
<comment type="catalytic activity">
    <reaction evidence="1">
        <text>adenosine(1518)/adenosine(1519) in 16S rRNA + 4 S-adenosyl-L-methionine = N(6)-dimethyladenosine(1518)/N(6)-dimethyladenosine(1519) in 16S rRNA + 4 S-adenosyl-L-homocysteine + 4 H(+)</text>
        <dbReference type="Rhea" id="RHEA:19609"/>
        <dbReference type="Rhea" id="RHEA-COMP:10232"/>
        <dbReference type="Rhea" id="RHEA-COMP:10233"/>
        <dbReference type="ChEBI" id="CHEBI:15378"/>
        <dbReference type="ChEBI" id="CHEBI:57856"/>
        <dbReference type="ChEBI" id="CHEBI:59789"/>
        <dbReference type="ChEBI" id="CHEBI:74411"/>
        <dbReference type="ChEBI" id="CHEBI:74493"/>
        <dbReference type="EC" id="2.1.1.182"/>
    </reaction>
</comment>
<comment type="subcellular location">
    <subcellularLocation>
        <location evidence="1">Cytoplasm</location>
    </subcellularLocation>
</comment>
<comment type="similarity">
    <text evidence="1">Belongs to the class I-like SAM-binding methyltransferase superfamily. rRNA adenine N(6)-methyltransferase family. RsmA subfamily.</text>
</comment>
<keyword id="KW-0963">Cytoplasm</keyword>
<keyword id="KW-0489">Methyltransferase</keyword>
<keyword id="KW-0694">RNA-binding</keyword>
<keyword id="KW-0698">rRNA processing</keyword>
<keyword id="KW-0949">S-adenosyl-L-methionine</keyword>
<keyword id="KW-0808">Transferase</keyword>
<accession>A7G9I5</accession>
<dbReference type="EC" id="2.1.1.182" evidence="1"/>
<dbReference type="EMBL" id="CP000728">
    <property type="protein sequence ID" value="ABS42086.1"/>
    <property type="molecule type" value="Genomic_DNA"/>
</dbReference>
<dbReference type="RefSeq" id="WP_011987195.1">
    <property type="nucleotide sequence ID" value="NC_009699.1"/>
</dbReference>
<dbReference type="SMR" id="A7G9I5"/>
<dbReference type="KEGG" id="cbf:CLI_0137"/>
<dbReference type="HOGENOM" id="CLU_041220_0_0_9"/>
<dbReference type="Proteomes" id="UP000002410">
    <property type="component" value="Chromosome"/>
</dbReference>
<dbReference type="GO" id="GO:0005829">
    <property type="term" value="C:cytosol"/>
    <property type="evidence" value="ECO:0007669"/>
    <property type="project" value="TreeGrafter"/>
</dbReference>
<dbReference type="GO" id="GO:0052908">
    <property type="term" value="F:16S rRNA (adenine(1518)-N(6)/adenine(1519)-N(6))-dimethyltransferase activity"/>
    <property type="evidence" value="ECO:0007669"/>
    <property type="project" value="UniProtKB-EC"/>
</dbReference>
<dbReference type="GO" id="GO:0003723">
    <property type="term" value="F:RNA binding"/>
    <property type="evidence" value="ECO:0007669"/>
    <property type="project" value="UniProtKB-KW"/>
</dbReference>
<dbReference type="CDD" id="cd02440">
    <property type="entry name" value="AdoMet_MTases"/>
    <property type="match status" value="1"/>
</dbReference>
<dbReference type="FunFam" id="1.10.8.100:FF:000001">
    <property type="entry name" value="Ribosomal RNA small subunit methyltransferase A"/>
    <property type="match status" value="1"/>
</dbReference>
<dbReference type="FunFam" id="3.40.50.150:FF:000023">
    <property type="entry name" value="Ribosomal RNA small subunit methyltransferase A"/>
    <property type="match status" value="1"/>
</dbReference>
<dbReference type="Gene3D" id="1.10.8.100">
    <property type="entry name" value="Ribosomal RNA adenine dimethylase-like, domain 2"/>
    <property type="match status" value="1"/>
</dbReference>
<dbReference type="Gene3D" id="3.40.50.150">
    <property type="entry name" value="Vaccinia Virus protein VP39"/>
    <property type="match status" value="1"/>
</dbReference>
<dbReference type="HAMAP" id="MF_00607">
    <property type="entry name" value="16SrRNA_methyltr_A"/>
    <property type="match status" value="1"/>
</dbReference>
<dbReference type="InterPro" id="IPR001737">
    <property type="entry name" value="KsgA/Erm"/>
</dbReference>
<dbReference type="InterPro" id="IPR023165">
    <property type="entry name" value="rRNA_Ade_diMease-like_C"/>
</dbReference>
<dbReference type="InterPro" id="IPR020596">
    <property type="entry name" value="rRNA_Ade_Mease_Trfase_CS"/>
</dbReference>
<dbReference type="InterPro" id="IPR020598">
    <property type="entry name" value="rRNA_Ade_methylase_Trfase_N"/>
</dbReference>
<dbReference type="InterPro" id="IPR011530">
    <property type="entry name" value="rRNA_adenine_dimethylase"/>
</dbReference>
<dbReference type="InterPro" id="IPR029063">
    <property type="entry name" value="SAM-dependent_MTases_sf"/>
</dbReference>
<dbReference type="NCBIfam" id="TIGR00755">
    <property type="entry name" value="ksgA"/>
    <property type="match status" value="1"/>
</dbReference>
<dbReference type="PANTHER" id="PTHR11727">
    <property type="entry name" value="DIMETHYLADENOSINE TRANSFERASE"/>
    <property type="match status" value="1"/>
</dbReference>
<dbReference type="PANTHER" id="PTHR11727:SF7">
    <property type="entry name" value="DIMETHYLADENOSINE TRANSFERASE-RELATED"/>
    <property type="match status" value="1"/>
</dbReference>
<dbReference type="Pfam" id="PF00398">
    <property type="entry name" value="RrnaAD"/>
    <property type="match status" value="1"/>
</dbReference>
<dbReference type="SMART" id="SM00650">
    <property type="entry name" value="rADc"/>
    <property type="match status" value="1"/>
</dbReference>
<dbReference type="SUPFAM" id="SSF53335">
    <property type="entry name" value="S-adenosyl-L-methionine-dependent methyltransferases"/>
    <property type="match status" value="1"/>
</dbReference>
<dbReference type="PROSITE" id="PS01131">
    <property type="entry name" value="RRNA_A_DIMETH"/>
    <property type="match status" value="1"/>
</dbReference>
<dbReference type="PROSITE" id="PS51689">
    <property type="entry name" value="SAM_RNA_A_N6_MT"/>
    <property type="match status" value="1"/>
</dbReference>
<evidence type="ECO:0000255" key="1">
    <source>
        <dbReference type="HAMAP-Rule" id="MF_00607"/>
    </source>
</evidence>
<protein>
    <recommendedName>
        <fullName evidence="1">Ribosomal RNA small subunit methyltransferase A</fullName>
        <ecNumber evidence="1">2.1.1.182</ecNumber>
    </recommendedName>
    <alternativeName>
        <fullName evidence="1">16S rRNA (adenine(1518)-N(6)/adenine(1519)-N(6))-dimethyltransferase</fullName>
    </alternativeName>
    <alternativeName>
        <fullName evidence="1">16S rRNA dimethyladenosine transferase</fullName>
    </alternativeName>
    <alternativeName>
        <fullName evidence="1">16S rRNA dimethylase</fullName>
    </alternativeName>
    <alternativeName>
        <fullName evidence="1">S-adenosylmethionine-6-N', N'-adenosyl(rRNA) dimethyltransferase</fullName>
    </alternativeName>
</protein>
<name>RSMA_CLOBL</name>